<proteinExistence type="inferred from homology"/>
<accession>Q3ASI0</accession>
<gene>
    <name evidence="1" type="primary">folD</name>
    <name type="ordered locus">Cag_0779</name>
</gene>
<dbReference type="EC" id="1.5.1.5" evidence="1"/>
<dbReference type="EC" id="3.5.4.9" evidence="1"/>
<dbReference type="EMBL" id="CP000108">
    <property type="protein sequence ID" value="ABB28045.1"/>
    <property type="molecule type" value="Genomic_DNA"/>
</dbReference>
<dbReference type="SMR" id="Q3ASI0"/>
<dbReference type="STRING" id="340177.Cag_0779"/>
<dbReference type="KEGG" id="cch:Cag_0779"/>
<dbReference type="eggNOG" id="COG0190">
    <property type="taxonomic scope" value="Bacteria"/>
</dbReference>
<dbReference type="HOGENOM" id="CLU_034045_2_0_10"/>
<dbReference type="OrthoDB" id="9803580at2"/>
<dbReference type="UniPathway" id="UPA00193"/>
<dbReference type="GO" id="GO:0005829">
    <property type="term" value="C:cytosol"/>
    <property type="evidence" value="ECO:0007669"/>
    <property type="project" value="TreeGrafter"/>
</dbReference>
<dbReference type="GO" id="GO:0004477">
    <property type="term" value="F:methenyltetrahydrofolate cyclohydrolase activity"/>
    <property type="evidence" value="ECO:0007669"/>
    <property type="project" value="UniProtKB-UniRule"/>
</dbReference>
<dbReference type="GO" id="GO:0004488">
    <property type="term" value="F:methylenetetrahydrofolate dehydrogenase (NADP+) activity"/>
    <property type="evidence" value="ECO:0007669"/>
    <property type="project" value="UniProtKB-UniRule"/>
</dbReference>
<dbReference type="GO" id="GO:0000105">
    <property type="term" value="P:L-histidine biosynthetic process"/>
    <property type="evidence" value="ECO:0007669"/>
    <property type="project" value="UniProtKB-KW"/>
</dbReference>
<dbReference type="GO" id="GO:0009086">
    <property type="term" value="P:methionine biosynthetic process"/>
    <property type="evidence" value="ECO:0007669"/>
    <property type="project" value="UniProtKB-KW"/>
</dbReference>
<dbReference type="GO" id="GO:0006164">
    <property type="term" value="P:purine nucleotide biosynthetic process"/>
    <property type="evidence" value="ECO:0007669"/>
    <property type="project" value="UniProtKB-KW"/>
</dbReference>
<dbReference type="GO" id="GO:0035999">
    <property type="term" value="P:tetrahydrofolate interconversion"/>
    <property type="evidence" value="ECO:0007669"/>
    <property type="project" value="UniProtKB-UniRule"/>
</dbReference>
<dbReference type="CDD" id="cd01080">
    <property type="entry name" value="NAD_bind_m-THF_DH_Cyclohyd"/>
    <property type="match status" value="1"/>
</dbReference>
<dbReference type="FunFam" id="3.40.50.720:FF:000189">
    <property type="entry name" value="Bifunctional protein FolD"/>
    <property type="match status" value="1"/>
</dbReference>
<dbReference type="FunFam" id="3.40.50.10860:FF:000005">
    <property type="entry name" value="C-1-tetrahydrofolate synthase, cytoplasmic, putative"/>
    <property type="match status" value="1"/>
</dbReference>
<dbReference type="Gene3D" id="3.40.50.10860">
    <property type="entry name" value="Leucine Dehydrogenase, chain A, domain 1"/>
    <property type="match status" value="1"/>
</dbReference>
<dbReference type="Gene3D" id="3.40.50.720">
    <property type="entry name" value="NAD(P)-binding Rossmann-like Domain"/>
    <property type="match status" value="1"/>
</dbReference>
<dbReference type="HAMAP" id="MF_01576">
    <property type="entry name" value="THF_DHG_CYH"/>
    <property type="match status" value="1"/>
</dbReference>
<dbReference type="InterPro" id="IPR046346">
    <property type="entry name" value="Aminoacid_DH-like_N_sf"/>
</dbReference>
<dbReference type="InterPro" id="IPR036291">
    <property type="entry name" value="NAD(P)-bd_dom_sf"/>
</dbReference>
<dbReference type="InterPro" id="IPR000672">
    <property type="entry name" value="THF_DH/CycHdrlase"/>
</dbReference>
<dbReference type="InterPro" id="IPR020630">
    <property type="entry name" value="THF_DH/CycHdrlase_cat_dom"/>
</dbReference>
<dbReference type="InterPro" id="IPR020867">
    <property type="entry name" value="THF_DH/CycHdrlase_CS"/>
</dbReference>
<dbReference type="InterPro" id="IPR020631">
    <property type="entry name" value="THF_DH/CycHdrlase_NAD-bd_dom"/>
</dbReference>
<dbReference type="NCBIfam" id="NF010771">
    <property type="entry name" value="PRK14174.1"/>
    <property type="match status" value="1"/>
</dbReference>
<dbReference type="NCBIfam" id="NF010783">
    <property type="entry name" value="PRK14186.1"/>
    <property type="match status" value="1"/>
</dbReference>
<dbReference type="PANTHER" id="PTHR48099:SF5">
    <property type="entry name" value="C-1-TETRAHYDROFOLATE SYNTHASE, CYTOPLASMIC"/>
    <property type="match status" value="1"/>
</dbReference>
<dbReference type="PANTHER" id="PTHR48099">
    <property type="entry name" value="C-1-TETRAHYDROFOLATE SYNTHASE, CYTOPLASMIC-RELATED"/>
    <property type="match status" value="1"/>
</dbReference>
<dbReference type="Pfam" id="PF00763">
    <property type="entry name" value="THF_DHG_CYH"/>
    <property type="match status" value="1"/>
</dbReference>
<dbReference type="Pfam" id="PF02882">
    <property type="entry name" value="THF_DHG_CYH_C"/>
    <property type="match status" value="1"/>
</dbReference>
<dbReference type="PRINTS" id="PR00085">
    <property type="entry name" value="THFDHDRGNASE"/>
</dbReference>
<dbReference type="SUPFAM" id="SSF53223">
    <property type="entry name" value="Aminoacid dehydrogenase-like, N-terminal domain"/>
    <property type="match status" value="1"/>
</dbReference>
<dbReference type="SUPFAM" id="SSF51735">
    <property type="entry name" value="NAD(P)-binding Rossmann-fold domains"/>
    <property type="match status" value="1"/>
</dbReference>
<dbReference type="PROSITE" id="PS00767">
    <property type="entry name" value="THF_DHG_CYH_2"/>
    <property type="match status" value="1"/>
</dbReference>
<organism>
    <name type="scientific">Chlorobium chlorochromatii (strain CaD3)</name>
    <dbReference type="NCBI Taxonomy" id="340177"/>
    <lineage>
        <taxon>Bacteria</taxon>
        <taxon>Pseudomonadati</taxon>
        <taxon>Chlorobiota</taxon>
        <taxon>Chlorobiia</taxon>
        <taxon>Chlorobiales</taxon>
        <taxon>Chlorobiaceae</taxon>
        <taxon>Chlorobium/Pelodictyon group</taxon>
        <taxon>Chlorobium</taxon>
    </lineage>
</organism>
<reference key="1">
    <citation type="submission" date="2005-08" db="EMBL/GenBank/DDBJ databases">
        <title>Complete sequence of Chlorobium chlorochromatii CaD3.</title>
        <authorList>
            <consortium name="US DOE Joint Genome Institute"/>
            <person name="Copeland A."/>
            <person name="Lucas S."/>
            <person name="Lapidus A."/>
            <person name="Barry K."/>
            <person name="Detter J.C."/>
            <person name="Glavina T."/>
            <person name="Hammon N."/>
            <person name="Israni S."/>
            <person name="Pitluck S."/>
            <person name="Bryant D."/>
            <person name="Schmutz J."/>
            <person name="Larimer F."/>
            <person name="Land M."/>
            <person name="Kyrpides N."/>
            <person name="Ivanova N."/>
            <person name="Richardson P."/>
        </authorList>
    </citation>
    <scope>NUCLEOTIDE SEQUENCE [LARGE SCALE GENOMIC DNA]</scope>
    <source>
        <strain>CaD3</strain>
    </source>
</reference>
<protein>
    <recommendedName>
        <fullName evidence="1">Bifunctional protein FolD</fullName>
    </recommendedName>
    <domain>
        <recommendedName>
            <fullName evidence="1">Methylenetetrahydrofolate dehydrogenase</fullName>
            <ecNumber evidence="1">1.5.1.5</ecNumber>
        </recommendedName>
    </domain>
    <domain>
        <recommendedName>
            <fullName evidence="1">Methenyltetrahydrofolate cyclohydrolase</fullName>
            <ecNumber evidence="1">3.5.4.9</ecNumber>
        </recommendedName>
    </domain>
</protein>
<evidence type="ECO:0000255" key="1">
    <source>
        <dbReference type="HAMAP-Rule" id="MF_01576"/>
    </source>
</evidence>
<sequence length="295" mass="31744">MIVIDGKKVSLELKNELRERVEALNAKCGKVPGLTVIIVGEDPASQVYVRNKAKSCKEIGMNSTVIELPADTTQEHLLKIINDLNNDDTVHGILVQQPMPKQIDEFTITLAIDPAKDVDGFHPENLGRLVMGHLDKCFVSCTPYGILELLGRYNIETKGKHCVVVGRSNIVGKPMANLMLQKLKESNCTVTICHSATPNITEFTKQADILIAAIGKANFITADMVKAGAVVIDVGINRVDDASAKNGYRLVGDVEYAGVSALASAITPVPGGVGPMTIAMLLKNTVQSFQRVNGL</sequence>
<comment type="function">
    <text evidence="1">Catalyzes the oxidation of 5,10-methylenetetrahydrofolate to 5,10-methenyltetrahydrofolate and then the hydrolysis of 5,10-methenyltetrahydrofolate to 10-formyltetrahydrofolate.</text>
</comment>
<comment type="catalytic activity">
    <reaction evidence="1">
        <text>(6R)-5,10-methylene-5,6,7,8-tetrahydrofolate + NADP(+) = (6R)-5,10-methenyltetrahydrofolate + NADPH</text>
        <dbReference type="Rhea" id="RHEA:22812"/>
        <dbReference type="ChEBI" id="CHEBI:15636"/>
        <dbReference type="ChEBI" id="CHEBI:57455"/>
        <dbReference type="ChEBI" id="CHEBI:57783"/>
        <dbReference type="ChEBI" id="CHEBI:58349"/>
        <dbReference type="EC" id="1.5.1.5"/>
    </reaction>
</comment>
<comment type="catalytic activity">
    <reaction evidence="1">
        <text>(6R)-5,10-methenyltetrahydrofolate + H2O = (6R)-10-formyltetrahydrofolate + H(+)</text>
        <dbReference type="Rhea" id="RHEA:23700"/>
        <dbReference type="ChEBI" id="CHEBI:15377"/>
        <dbReference type="ChEBI" id="CHEBI:15378"/>
        <dbReference type="ChEBI" id="CHEBI:57455"/>
        <dbReference type="ChEBI" id="CHEBI:195366"/>
        <dbReference type="EC" id="3.5.4.9"/>
    </reaction>
</comment>
<comment type="pathway">
    <text evidence="1">One-carbon metabolism; tetrahydrofolate interconversion.</text>
</comment>
<comment type="subunit">
    <text evidence="1">Homodimer.</text>
</comment>
<comment type="similarity">
    <text evidence="1">Belongs to the tetrahydrofolate dehydrogenase/cyclohydrolase family.</text>
</comment>
<name>FOLD_CHLCH</name>
<feature type="chain" id="PRO_0000268312" description="Bifunctional protein FolD">
    <location>
        <begin position="1"/>
        <end position="295"/>
    </location>
</feature>
<feature type="binding site" evidence="1">
    <location>
        <begin position="166"/>
        <end position="168"/>
    </location>
    <ligand>
        <name>NADP(+)</name>
        <dbReference type="ChEBI" id="CHEBI:58349"/>
    </ligand>
</feature>
<feature type="binding site" evidence="1">
    <location>
        <position position="195"/>
    </location>
    <ligand>
        <name>NADP(+)</name>
        <dbReference type="ChEBI" id="CHEBI:58349"/>
    </ligand>
</feature>
<feature type="binding site" evidence="1">
    <location>
        <position position="236"/>
    </location>
    <ligand>
        <name>NADP(+)</name>
        <dbReference type="ChEBI" id="CHEBI:58349"/>
    </ligand>
</feature>
<keyword id="KW-0028">Amino-acid biosynthesis</keyword>
<keyword id="KW-0368">Histidine biosynthesis</keyword>
<keyword id="KW-0378">Hydrolase</keyword>
<keyword id="KW-0486">Methionine biosynthesis</keyword>
<keyword id="KW-0511">Multifunctional enzyme</keyword>
<keyword id="KW-0521">NADP</keyword>
<keyword id="KW-0554">One-carbon metabolism</keyword>
<keyword id="KW-0560">Oxidoreductase</keyword>
<keyword id="KW-0658">Purine biosynthesis</keyword>